<evidence type="ECO:0000250" key="1"/>
<evidence type="ECO:0000255" key="2">
    <source>
        <dbReference type="HAMAP-Rule" id="MF_01391"/>
    </source>
</evidence>
<name>CCSA_SYNJA</name>
<organism>
    <name type="scientific">Synechococcus sp. (strain JA-3-3Ab)</name>
    <name type="common">Cyanobacteria bacterium Yellowstone A-Prime</name>
    <dbReference type="NCBI Taxonomy" id="321327"/>
    <lineage>
        <taxon>Bacteria</taxon>
        <taxon>Bacillati</taxon>
        <taxon>Cyanobacteriota</taxon>
        <taxon>Cyanophyceae</taxon>
        <taxon>Synechococcales</taxon>
        <taxon>Synechococcaceae</taxon>
        <taxon>Synechococcus</taxon>
    </lineage>
</organism>
<reference key="1">
    <citation type="journal article" date="2007" name="ISME J.">
        <title>Population level functional diversity in a microbial community revealed by comparative genomic and metagenomic analyses.</title>
        <authorList>
            <person name="Bhaya D."/>
            <person name="Grossman A.R."/>
            <person name="Steunou A.-S."/>
            <person name="Khuri N."/>
            <person name="Cohan F.M."/>
            <person name="Hamamura N."/>
            <person name="Melendrez M.C."/>
            <person name="Bateson M.M."/>
            <person name="Ward D.M."/>
            <person name="Heidelberg J.F."/>
        </authorList>
    </citation>
    <scope>NUCLEOTIDE SEQUENCE [LARGE SCALE GENOMIC DNA]</scope>
    <source>
        <strain>JA-3-3Ab</strain>
    </source>
</reference>
<gene>
    <name evidence="2" type="primary">ccsA</name>
    <name type="ordered locus">CYA_1240</name>
</gene>
<accession>Q2JV29</accession>
<protein>
    <recommendedName>
        <fullName evidence="2">Cytochrome c biogenesis protein CcsA</fullName>
    </recommendedName>
</protein>
<proteinExistence type="inferred from homology"/>
<dbReference type="EMBL" id="CP000239">
    <property type="protein sequence ID" value="ABC99423.1"/>
    <property type="molecule type" value="Genomic_DNA"/>
</dbReference>
<dbReference type="SMR" id="Q2JV29"/>
<dbReference type="STRING" id="321327.CYA_1240"/>
<dbReference type="KEGG" id="cya:CYA_1240"/>
<dbReference type="eggNOG" id="COG0755">
    <property type="taxonomic scope" value="Bacteria"/>
</dbReference>
<dbReference type="HOGENOM" id="CLU_049710_2_4_3"/>
<dbReference type="Proteomes" id="UP000008818">
    <property type="component" value="Chromosome"/>
</dbReference>
<dbReference type="GO" id="GO:0031676">
    <property type="term" value="C:plasma membrane-derived thylakoid membrane"/>
    <property type="evidence" value="ECO:0007669"/>
    <property type="project" value="UniProtKB-SubCell"/>
</dbReference>
<dbReference type="GO" id="GO:0020037">
    <property type="term" value="F:heme binding"/>
    <property type="evidence" value="ECO:0007669"/>
    <property type="project" value="InterPro"/>
</dbReference>
<dbReference type="GO" id="GO:0017004">
    <property type="term" value="P:cytochrome complex assembly"/>
    <property type="evidence" value="ECO:0007669"/>
    <property type="project" value="UniProtKB-UniRule"/>
</dbReference>
<dbReference type="HAMAP" id="MF_01391">
    <property type="entry name" value="CytC_CcsA"/>
    <property type="match status" value="1"/>
</dbReference>
<dbReference type="InterPro" id="IPR002541">
    <property type="entry name" value="Cyt_c_assembly"/>
</dbReference>
<dbReference type="InterPro" id="IPR017562">
    <property type="entry name" value="Cyt_c_biogenesis_CcsA"/>
</dbReference>
<dbReference type="InterPro" id="IPR045062">
    <property type="entry name" value="Cyt_c_biogenesis_CcsA/CcmC"/>
</dbReference>
<dbReference type="NCBIfam" id="TIGR03144">
    <property type="entry name" value="cytochr_II_ccsB"/>
    <property type="match status" value="1"/>
</dbReference>
<dbReference type="PANTHER" id="PTHR30071:SF1">
    <property type="entry name" value="CYTOCHROME B_B6 PROTEIN-RELATED"/>
    <property type="match status" value="1"/>
</dbReference>
<dbReference type="PANTHER" id="PTHR30071">
    <property type="entry name" value="HEME EXPORTER PROTEIN C"/>
    <property type="match status" value="1"/>
</dbReference>
<dbReference type="Pfam" id="PF01578">
    <property type="entry name" value="Cytochrom_C_asm"/>
    <property type="match status" value="1"/>
</dbReference>
<sequence length="344" mass="37233">MLAITALAGLDLAQWQALLNNVAFAVCLGAMLFYWGGAAFPQVQLLSELGLAGMIGANLTIAALLTARWIDAGYFPLSNLYESLFFLAWGITALHLLALHWTRSRWVGVTTAPLATGVVAFAALALPADMQEAQPLVPALQSNWLMMHVTVMLLAYAALLVGSLLAIAFLIVTRGQEVQLKGNSLGLQFGPSQPATHPEWTEATLPSPAAELVYAGIRSPRPAEPPPQPAPEGIPLQRLSLAEILDNTSYRLIGLGFPLLTIGIIAGAVWANEAWGTYWSWDPKETWALITWLVFAAYLHARITKGWQGKRPALLASLGFGVVWVCYLGVNFLGKGLHSYGWFF</sequence>
<feature type="chain" id="PRO_0000353720" description="Cytochrome c biogenesis protein CcsA">
    <location>
        <begin position="1"/>
        <end position="344"/>
    </location>
</feature>
<feature type="transmembrane region" description="Helical" evidence="2">
    <location>
        <begin position="21"/>
        <end position="41"/>
    </location>
</feature>
<feature type="transmembrane region" description="Helical" evidence="2">
    <location>
        <begin position="45"/>
        <end position="65"/>
    </location>
</feature>
<feature type="transmembrane region" description="Helical" evidence="2">
    <location>
        <begin position="80"/>
        <end position="100"/>
    </location>
</feature>
<feature type="transmembrane region" description="Helical" evidence="2">
    <location>
        <begin position="106"/>
        <end position="126"/>
    </location>
</feature>
<feature type="transmembrane region" description="Helical" evidence="2">
    <location>
        <begin position="151"/>
        <end position="171"/>
    </location>
</feature>
<feature type="transmembrane region" description="Helical" evidence="2">
    <location>
        <begin position="252"/>
        <end position="272"/>
    </location>
</feature>
<feature type="transmembrane region" description="Helical" evidence="2">
    <location>
        <begin position="287"/>
        <end position="307"/>
    </location>
</feature>
<feature type="transmembrane region" description="Helical" evidence="2">
    <location>
        <begin position="313"/>
        <end position="333"/>
    </location>
</feature>
<comment type="function">
    <text evidence="2">Required during biogenesis of c-type cytochromes (cytochrome c6 and cytochrome f) at the step of heme attachment.</text>
</comment>
<comment type="subunit">
    <text evidence="1">May interact with ccs1.</text>
</comment>
<comment type="subcellular location">
    <subcellularLocation>
        <location evidence="2">Cellular thylakoid membrane</location>
        <topology evidence="2">Multi-pass membrane protein</topology>
    </subcellularLocation>
</comment>
<comment type="similarity">
    <text evidence="2">Belongs to the CcmF/CycK/Ccl1/NrfE/CcsA family.</text>
</comment>
<keyword id="KW-0201">Cytochrome c-type biogenesis</keyword>
<keyword id="KW-0472">Membrane</keyword>
<keyword id="KW-0793">Thylakoid</keyword>
<keyword id="KW-0812">Transmembrane</keyword>
<keyword id="KW-1133">Transmembrane helix</keyword>